<feature type="chain" id="PRO_0000330849" description="Protein IMPACT">
    <location>
        <begin position="1"/>
        <end position="318"/>
    </location>
</feature>
<feature type="domain" description="RWD" evidence="3">
    <location>
        <begin position="14"/>
        <end position="116"/>
    </location>
</feature>
<feature type="region of interest" description="Disordered" evidence="4">
    <location>
        <begin position="294"/>
        <end position="318"/>
    </location>
</feature>
<feature type="compositionally biased region" description="Basic residues" evidence="4">
    <location>
        <begin position="304"/>
        <end position="318"/>
    </location>
</feature>
<feature type="modified residue" description="Phosphoserine" evidence="2">
    <location>
        <position position="295"/>
    </location>
</feature>
<feature type="splice variant" id="VSP_033135" description="In isoform 2." evidence="5">
    <location>
        <begin position="163"/>
        <end position="177"/>
    </location>
</feature>
<dbReference type="EMBL" id="BC151281">
    <property type="protein sequence ID" value="AAI51282.1"/>
    <property type="molecule type" value="mRNA"/>
</dbReference>
<dbReference type="EMBL" id="AY948549">
    <property type="protein sequence ID" value="AAX86795.1"/>
    <property type="molecule type" value="mRNA"/>
</dbReference>
<dbReference type="RefSeq" id="NP_001095971.1">
    <molecule id="A7YY45-2"/>
    <property type="nucleotide sequence ID" value="NM_001102501.1"/>
</dbReference>
<dbReference type="RefSeq" id="XP_005224148.2">
    <property type="nucleotide sequence ID" value="XM_005224091.3"/>
</dbReference>
<dbReference type="SMR" id="A7YY45"/>
<dbReference type="FunCoup" id="A7YY45">
    <property type="interactions" value="1809"/>
</dbReference>
<dbReference type="STRING" id="9913.ENSBTAP00000045263"/>
<dbReference type="PaxDb" id="9913-ENSBTAP00000045263"/>
<dbReference type="GeneID" id="517248"/>
<dbReference type="KEGG" id="bta:517248"/>
<dbReference type="CTD" id="55364"/>
<dbReference type="eggNOG" id="KOG3299">
    <property type="taxonomic scope" value="Eukaryota"/>
</dbReference>
<dbReference type="HOGENOM" id="CLU_045276_1_0_1"/>
<dbReference type="InParanoid" id="A7YY45"/>
<dbReference type="OrthoDB" id="69641at2759"/>
<dbReference type="TreeFam" id="TF314823"/>
<dbReference type="Proteomes" id="UP000009136">
    <property type="component" value="Unplaced"/>
</dbReference>
<dbReference type="GO" id="GO:0005737">
    <property type="term" value="C:cytoplasm"/>
    <property type="evidence" value="ECO:0000250"/>
    <property type="project" value="UniProtKB"/>
</dbReference>
<dbReference type="GO" id="GO:0003779">
    <property type="term" value="F:actin binding"/>
    <property type="evidence" value="ECO:0007669"/>
    <property type="project" value="UniProtKB-KW"/>
</dbReference>
<dbReference type="GO" id="GO:0140311">
    <property type="term" value="F:protein sequestering activity"/>
    <property type="evidence" value="ECO:0000250"/>
    <property type="project" value="UniProtKB"/>
</dbReference>
<dbReference type="GO" id="GO:0034198">
    <property type="term" value="P:cellular response to amino acid starvation"/>
    <property type="evidence" value="ECO:0000250"/>
    <property type="project" value="UniProtKB"/>
</dbReference>
<dbReference type="GO" id="GO:0140469">
    <property type="term" value="P:GCN2-mediated signaling"/>
    <property type="evidence" value="ECO:0000250"/>
    <property type="project" value="UniProtKB"/>
</dbReference>
<dbReference type="GO" id="GO:0035556">
    <property type="term" value="P:intracellular signal transduction"/>
    <property type="evidence" value="ECO:0000250"/>
    <property type="project" value="UniProtKB"/>
</dbReference>
<dbReference type="GO" id="GO:0000122">
    <property type="term" value="P:negative regulation of transcription by RNA polymerase II"/>
    <property type="evidence" value="ECO:0000250"/>
    <property type="project" value="UniProtKB"/>
</dbReference>
<dbReference type="GO" id="GO:1990138">
    <property type="term" value="P:neuron projection extension"/>
    <property type="evidence" value="ECO:0000250"/>
    <property type="project" value="UniProtKB"/>
</dbReference>
<dbReference type="GO" id="GO:0045666">
    <property type="term" value="P:positive regulation of neuron differentiation"/>
    <property type="evidence" value="ECO:0000250"/>
    <property type="project" value="UniProtKB"/>
</dbReference>
<dbReference type="GO" id="GO:1990611">
    <property type="term" value="P:regulation of cytoplasmic translational initiation in response to stress"/>
    <property type="evidence" value="ECO:0000250"/>
    <property type="project" value="UniProtKB"/>
</dbReference>
<dbReference type="GO" id="GO:0006446">
    <property type="term" value="P:regulation of translational initiation"/>
    <property type="evidence" value="ECO:0000318"/>
    <property type="project" value="GO_Central"/>
</dbReference>
<dbReference type="CDD" id="cd23821">
    <property type="entry name" value="RWD_IMPACT"/>
    <property type="match status" value="1"/>
</dbReference>
<dbReference type="FunFam" id="3.10.110.10:FF:000066">
    <property type="entry name" value="IMPACT isoform 1"/>
    <property type="match status" value="1"/>
</dbReference>
<dbReference type="FunFam" id="3.30.230.30:FF:000001">
    <property type="entry name" value="IMPACT isoform 1"/>
    <property type="match status" value="1"/>
</dbReference>
<dbReference type="Gene3D" id="3.30.230.30">
    <property type="entry name" value="Impact, N-terminal domain"/>
    <property type="match status" value="1"/>
</dbReference>
<dbReference type="Gene3D" id="3.10.110.10">
    <property type="entry name" value="Ubiquitin Conjugating Enzyme"/>
    <property type="match status" value="1"/>
</dbReference>
<dbReference type="InterPro" id="IPR023582">
    <property type="entry name" value="Impact"/>
</dbReference>
<dbReference type="InterPro" id="IPR001498">
    <property type="entry name" value="Impact_N"/>
</dbReference>
<dbReference type="InterPro" id="IPR036956">
    <property type="entry name" value="Impact_N_sf"/>
</dbReference>
<dbReference type="InterPro" id="IPR020568">
    <property type="entry name" value="Ribosomal_Su5_D2-typ_SF"/>
</dbReference>
<dbReference type="InterPro" id="IPR006575">
    <property type="entry name" value="RWD_dom"/>
</dbReference>
<dbReference type="InterPro" id="IPR016135">
    <property type="entry name" value="UBQ-conjugating_enzyme/RWD"/>
</dbReference>
<dbReference type="InterPro" id="IPR020569">
    <property type="entry name" value="UPF0029_Impact_CS"/>
</dbReference>
<dbReference type="PANTHER" id="PTHR16301">
    <property type="entry name" value="IMPACT-RELATED"/>
    <property type="match status" value="1"/>
</dbReference>
<dbReference type="PANTHER" id="PTHR16301:SF25">
    <property type="entry name" value="PROTEIN IMPACT"/>
    <property type="match status" value="1"/>
</dbReference>
<dbReference type="Pfam" id="PF05773">
    <property type="entry name" value="RWD"/>
    <property type="match status" value="1"/>
</dbReference>
<dbReference type="Pfam" id="PF01205">
    <property type="entry name" value="UPF0029"/>
    <property type="match status" value="1"/>
</dbReference>
<dbReference type="SMART" id="SM00591">
    <property type="entry name" value="RWD"/>
    <property type="match status" value="1"/>
</dbReference>
<dbReference type="SUPFAM" id="SSF54211">
    <property type="entry name" value="Ribosomal protein S5 domain 2-like"/>
    <property type="match status" value="1"/>
</dbReference>
<dbReference type="SUPFAM" id="SSF54495">
    <property type="entry name" value="UBC-like"/>
    <property type="match status" value="1"/>
</dbReference>
<dbReference type="PROSITE" id="PS50908">
    <property type="entry name" value="RWD"/>
    <property type="match status" value="1"/>
</dbReference>
<dbReference type="PROSITE" id="PS00910">
    <property type="entry name" value="UPF0029"/>
    <property type="match status" value="1"/>
</dbReference>
<comment type="function">
    <text evidence="1">Translational regulator that ensures constant high levels of translation upon a variety of stress conditions, such as amino acid starvation, UV-C irradiation, proteasome inhibitor treatment and glucose deprivation. Plays a role as a negative regulator of the EIF2AK4/GCN2 kinase activity; impairs GCN1-mediated EIF2AK4/GCN2 activation, and hence EIF2AK4/GCN2-mediated eIF-2-alpha phosphorylation and subsequent down-regulation of protein synthesis. May be required to regulate translation in specific neuronal cells under amino acid starvation conditions by preventing GCN2 activation and therefore ATF4 synthesis. Through its inhibitory action on EIF2AK4/GCN2, plays a role in differentiation of neuronal cells by stimulating neurite outgrowth.</text>
</comment>
<comment type="subunit">
    <text evidence="1">Interacts with GCN1; prevents the interaction of GCN1 with EIF2AK4/GCN2 and inhibits EIF2AK4/GCN2 kinase activity. Interaction with RPL39; this interaction occurs in a GCN1-independent manner. Associates with ribosomes; this interaction occurs in a GCN1-independent manner. Associates with actin; this interaction occurs in a GCN1-independent manner.</text>
</comment>
<comment type="subcellular location">
    <subcellularLocation>
        <location evidence="1">Cytoplasm</location>
    </subcellularLocation>
</comment>
<comment type="alternative products">
    <event type="alternative splicing"/>
    <isoform>
        <id>A7YY45-1</id>
        <name>1</name>
        <sequence type="displayed"/>
    </isoform>
    <isoform>
        <id>A7YY45-2</id>
        <name>2</name>
        <sequence type="described" ref="VSP_033135"/>
    </isoform>
</comment>
<comment type="similarity">
    <text evidence="6">Belongs to the IMPACT family.</text>
</comment>
<evidence type="ECO:0000250" key="1">
    <source>
        <dbReference type="UniProtKB" id="O55091"/>
    </source>
</evidence>
<evidence type="ECO:0000250" key="2">
    <source>
        <dbReference type="UniProtKB" id="Q5GFD9"/>
    </source>
</evidence>
<evidence type="ECO:0000255" key="3">
    <source>
        <dbReference type="PROSITE-ProRule" id="PRU00179"/>
    </source>
</evidence>
<evidence type="ECO:0000256" key="4">
    <source>
        <dbReference type="SAM" id="MobiDB-lite"/>
    </source>
</evidence>
<evidence type="ECO:0000303" key="5">
    <source ref="1"/>
</evidence>
<evidence type="ECO:0000305" key="6"/>
<accession>A7YY45</accession>
<accession>Q52UL6</accession>
<reference key="1">
    <citation type="submission" date="2007-07" db="EMBL/GenBank/DDBJ databases">
        <authorList>
            <consortium name="NIH - Mammalian Gene Collection (MGC) project"/>
        </authorList>
    </citation>
    <scope>NUCLEOTIDE SEQUENCE [LARGE SCALE MRNA] (ISOFORM 2)</scope>
    <source>
        <strain>Hereford</strain>
        <tissue>Thymus</tissue>
    </source>
</reference>
<reference key="2">
    <citation type="submission" date="2005-02" db="EMBL/GenBank/DDBJ databases">
        <title>Putative imprinted gene expression during bovine early embryo development.</title>
        <authorList>
            <person name="Ruddock N.T."/>
            <person name="Wilson K.J."/>
            <person name="French A.J."/>
            <person name="Holland M.K."/>
        </authorList>
    </citation>
    <scope>NUCLEOTIDE SEQUENCE [MRNA] OF 31-212 (ISOFORM 1)</scope>
</reference>
<keyword id="KW-0009">Actin-binding</keyword>
<keyword id="KW-0025">Alternative splicing</keyword>
<keyword id="KW-0963">Cytoplasm</keyword>
<keyword id="KW-0221">Differentiation</keyword>
<keyword id="KW-0524">Neurogenesis</keyword>
<keyword id="KW-0597">Phosphoprotein</keyword>
<keyword id="KW-1185">Reference proteome</keyword>
<keyword id="KW-0678">Repressor</keyword>
<keyword id="KW-0346">Stress response</keyword>
<keyword id="KW-0810">Translation regulation</keyword>
<proteinExistence type="evidence at transcript level"/>
<gene>
    <name type="primary">IMPACT</name>
</gene>
<name>IMPCT_BOVIN</name>
<protein>
    <recommendedName>
        <fullName>Protein IMPACT</fullName>
    </recommendedName>
    <alternativeName>
        <fullName>Imprinted and ancient gene protein homolog</fullName>
    </alternativeName>
</protein>
<sequence length="318" mass="36333">MAEGDTGSDQRQNEEIEAMAAIYGEEWCVIDDCAKIFCIRISDDIDDPKWTLCLQVMLPNEYPGTAPPIYQLNAPWLKGQERADLSNSLEEIYIQNIGESILYLWVEKIRDVLIQKSQMTEPGPDVKKKTEEEDVECEDDLVLACQPENQVKTLDFDVSENRTEIEELPPIDHGIPITDRRSTFQAHLAPVVCPKQVKMVLAKLYENKKIASATHNIYAYRIYCEDKQTFLQDCEDDGETAAGGRLLHLMEILNVRDVMVVVSRWYGGVLLGPDRFKHINNCARNILVEKNYTNSPEESSKALGKNKKVRKDKKRSEH</sequence>
<organism>
    <name type="scientific">Bos taurus</name>
    <name type="common">Bovine</name>
    <dbReference type="NCBI Taxonomy" id="9913"/>
    <lineage>
        <taxon>Eukaryota</taxon>
        <taxon>Metazoa</taxon>
        <taxon>Chordata</taxon>
        <taxon>Craniata</taxon>
        <taxon>Vertebrata</taxon>
        <taxon>Euteleostomi</taxon>
        <taxon>Mammalia</taxon>
        <taxon>Eutheria</taxon>
        <taxon>Laurasiatheria</taxon>
        <taxon>Artiodactyla</taxon>
        <taxon>Ruminantia</taxon>
        <taxon>Pecora</taxon>
        <taxon>Bovidae</taxon>
        <taxon>Bovinae</taxon>
        <taxon>Bos</taxon>
    </lineage>
</organism>